<feature type="chain" id="PRO_1000133813" description="Protein ApaG">
    <location>
        <begin position="1"/>
        <end position="125"/>
    </location>
</feature>
<feature type="domain" description="ApaG" evidence="1">
    <location>
        <begin position="1"/>
        <end position="125"/>
    </location>
</feature>
<organism>
    <name type="scientific">Salmonella paratyphi A (strain AKU_12601)</name>
    <dbReference type="NCBI Taxonomy" id="554290"/>
    <lineage>
        <taxon>Bacteria</taxon>
        <taxon>Pseudomonadati</taxon>
        <taxon>Pseudomonadota</taxon>
        <taxon>Gammaproteobacteria</taxon>
        <taxon>Enterobacterales</taxon>
        <taxon>Enterobacteriaceae</taxon>
        <taxon>Salmonella</taxon>
    </lineage>
</organism>
<dbReference type="EMBL" id="FM200053">
    <property type="protein sequence ID" value="CAR58197.1"/>
    <property type="molecule type" value="Genomic_DNA"/>
</dbReference>
<dbReference type="RefSeq" id="WP_000610894.1">
    <property type="nucleotide sequence ID" value="NC_011147.1"/>
</dbReference>
<dbReference type="SMR" id="B5BL26"/>
<dbReference type="GeneID" id="66754612"/>
<dbReference type="KEGG" id="sek:SSPA0086"/>
<dbReference type="HOGENOM" id="CLU_128074_0_0_6"/>
<dbReference type="Proteomes" id="UP000001869">
    <property type="component" value="Chromosome"/>
</dbReference>
<dbReference type="GO" id="GO:0070987">
    <property type="term" value="P:error-free translesion synthesis"/>
    <property type="evidence" value="ECO:0007669"/>
    <property type="project" value="TreeGrafter"/>
</dbReference>
<dbReference type="Gene3D" id="2.60.40.1470">
    <property type="entry name" value="ApaG domain"/>
    <property type="match status" value="1"/>
</dbReference>
<dbReference type="HAMAP" id="MF_00791">
    <property type="entry name" value="ApaG"/>
    <property type="match status" value="1"/>
</dbReference>
<dbReference type="InterPro" id="IPR007474">
    <property type="entry name" value="ApaG_domain"/>
</dbReference>
<dbReference type="InterPro" id="IPR036767">
    <property type="entry name" value="ApaG_sf"/>
</dbReference>
<dbReference type="InterPro" id="IPR023065">
    <property type="entry name" value="Uncharacterised_ApaG"/>
</dbReference>
<dbReference type="NCBIfam" id="NF003967">
    <property type="entry name" value="PRK05461.1"/>
    <property type="match status" value="1"/>
</dbReference>
<dbReference type="PANTHER" id="PTHR14289">
    <property type="entry name" value="F-BOX ONLY PROTEIN 3"/>
    <property type="match status" value="1"/>
</dbReference>
<dbReference type="PANTHER" id="PTHR14289:SF16">
    <property type="entry name" value="POLYMERASE DELTA-INTERACTING PROTEIN 2"/>
    <property type="match status" value="1"/>
</dbReference>
<dbReference type="Pfam" id="PF04379">
    <property type="entry name" value="DUF525"/>
    <property type="match status" value="1"/>
</dbReference>
<dbReference type="SUPFAM" id="SSF110069">
    <property type="entry name" value="ApaG-like"/>
    <property type="match status" value="1"/>
</dbReference>
<dbReference type="PROSITE" id="PS51087">
    <property type="entry name" value="APAG"/>
    <property type="match status" value="1"/>
</dbReference>
<sequence length="125" mass="13924">MINSPRVCIQVQSVYIEAQSSPDDERYVFAYTVTIRNLGRAPVQLLGRYWLITNGHGRETEVQGEGVVGVQPRIAPGEEYQYTSGAVIETPLGTMQGHYEMIDENGDAFTIDIPVFRLAVPTLIH</sequence>
<name>APAG_SALPK</name>
<protein>
    <recommendedName>
        <fullName evidence="1">Protein ApaG</fullName>
    </recommendedName>
</protein>
<reference key="1">
    <citation type="journal article" date="2009" name="BMC Genomics">
        <title>Pseudogene accumulation in the evolutionary histories of Salmonella enterica serovars Paratyphi A and Typhi.</title>
        <authorList>
            <person name="Holt K.E."/>
            <person name="Thomson N.R."/>
            <person name="Wain J."/>
            <person name="Langridge G.C."/>
            <person name="Hasan R."/>
            <person name="Bhutta Z.A."/>
            <person name="Quail M.A."/>
            <person name="Norbertczak H."/>
            <person name="Walker D."/>
            <person name="Simmonds M."/>
            <person name="White B."/>
            <person name="Bason N."/>
            <person name="Mungall K."/>
            <person name="Dougan G."/>
            <person name="Parkhill J."/>
        </authorList>
    </citation>
    <scope>NUCLEOTIDE SEQUENCE [LARGE SCALE GENOMIC DNA]</scope>
    <source>
        <strain>AKU_12601</strain>
    </source>
</reference>
<gene>
    <name evidence="1" type="primary">apaG</name>
    <name type="ordered locus">SSPA0086</name>
</gene>
<evidence type="ECO:0000255" key="1">
    <source>
        <dbReference type="HAMAP-Rule" id="MF_00791"/>
    </source>
</evidence>
<accession>B5BL26</accession>
<proteinExistence type="inferred from homology"/>